<gene>
    <name evidence="1" type="primary">astB</name>
    <name type="ordered locus">Z2777</name>
    <name type="ordered locus">ECs2451</name>
</gene>
<organism>
    <name type="scientific">Escherichia coli O157:H7</name>
    <dbReference type="NCBI Taxonomy" id="83334"/>
    <lineage>
        <taxon>Bacteria</taxon>
        <taxon>Pseudomonadati</taxon>
        <taxon>Pseudomonadota</taxon>
        <taxon>Gammaproteobacteria</taxon>
        <taxon>Enterobacterales</taxon>
        <taxon>Enterobacteriaceae</taxon>
        <taxon>Escherichia</taxon>
    </lineage>
</organism>
<name>ASTB_ECO57</name>
<evidence type="ECO:0000255" key="1">
    <source>
        <dbReference type="HAMAP-Rule" id="MF_01172"/>
    </source>
</evidence>
<sequence length="447" mass="49325">MNAWEVNFDGLVGLTHHYAGLSFGNKASTRHRFQVSNPRLAAKQGLLKMKTLADAGFPQAVIPPHERPFIPVLRQLGFSGSDEQVLEKVVRQAPHWLSSVSSASPMWVANAATIAPSADTLDGKVHLTVANLNNKFHRSLEAPVTESLLKAIFNDEEKFSVHSALPQVALLGDEGAANHNRLGGHYGEPGMQLFVYGREEGNDTRPSRYPARQTREASEAVARLNQVNPQQVIFAQQNPDVIDQGVFHNDVIAVSNRQVLFCHQQAFARQSQLLANLRARVNGFMAIEVPATQVSVSDAVSTYLFNSQLLSRDDGSMMLVLPQECREHAGVWGYLNELLAADNPISELKVFDLRESMANGGGPACLRLRVVLTQEERRAVNPAVMMNDTLFNALNDWVDRYYRDRLTAADLADPQLLREGREALDVLSQLLNLGSVYPFQREGGGNG</sequence>
<reference key="1">
    <citation type="journal article" date="2001" name="Nature">
        <title>Genome sequence of enterohaemorrhagic Escherichia coli O157:H7.</title>
        <authorList>
            <person name="Perna N.T."/>
            <person name="Plunkett G. III"/>
            <person name="Burland V."/>
            <person name="Mau B."/>
            <person name="Glasner J.D."/>
            <person name="Rose D.J."/>
            <person name="Mayhew G.F."/>
            <person name="Evans P.S."/>
            <person name="Gregor J."/>
            <person name="Kirkpatrick H.A."/>
            <person name="Posfai G."/>
            <person name="Hackett J."/>
            <person name="Klink S."/>
            <person name="Boutin A."/>
            <person name="Shao Y."/>
            <person name="Miller L."/>
            <person name="Grotbeck E.J."/>
            <person name="Davis N.W."/>
            <person name="Lim A."/>
            <person name="Dimalanta E.T."/>
            <person name="Potamousis K."/>
            <person name="Apodaca J."/>
            <person name="Anantharaman T.S."/>
            <person name="Lin J."/>
            <person name="Yen G."/>
            <person name="Schwartz D.C."/>
            <person name="Welch R.A."/>
            <person name="Blattner F.R."/>
        </authorList>
    </citation>
    <scope>NUCLEOTIDE SEQUENCE [LARGE SCALE GENOMIC DNA]</scope>
    <source>
        <strain>O157:H7 / EDL933 / ATCC 700927 / EHEC</strain>
    </source>
</reference>
<reference key="2">
    <citation type="journal article" date="2001" name="DNA Res.">
        <title>Complete genome sequence of enterohemorrhagic Escherichia coli O157:H7 and genomic comparison with a laboratory strain K-12.</title>
        <authorList>
            <person name="Hayashi T."/>
            <person name="Makino K."/>
            <person name="Ohnishi M."/>
            <person name="Kurokawa K."/>
            <person name="Ishii K."/>
            <person name="Yokoyama K."/>
            <person name="Han C.-G."/>
            <person name="Ohtsubo E."/>
            <person name="Nakayama K."/>
            <person name="Murata T."/>
            <person name="Tanaka M."/>
            <person name="Tobe T."/>
            <person name="Iida T."/>
            <person name="Takami H."/>
            <person name="Honda T."/>
            <person name="Sasakawa C."/>
            <person name="Ogasawara N."/>
            <person name="Yasunaga T."/>
            <person name="Kuhara S."/>
            <person name="Shiba T."/>
            <person name="Hattori M."/>
            <person name="Shinagawa H."/>
        </authorList>
    </citation>
    <scope>NUCLEOTIDE SEQUENCE [LARGE SCALE GENOMIC DNA]</scope>
    <source>
        <strain>O157:H7 / Sakai / RIMD 0509952 / EHEC</strain>
    </source>
</reference>
<protein>
    <recommendedName>
        <fullName evidence="1">N-succinylarginine dihydrolase</fullName>
        <ecNumber evidence="1">3.5.3.23</ecNumber>
    </recommendedName>
</protein>
<dbReference type="EC" id="3.5.3.23" evidence="1"/>
<dbReference type="EMBL" id="AE005174">
    <property type="protein sequence ID" value="AAG56731.1"/>
    <property type="molecule type" value="Genomic_DNA"/>
</dbReference>
<dbReference type="EMBL" id="BA000007">
    <property type="protein sequence ID" value="BAB35874.1"/>
    <property type="molecule type" value="Genomic_DNA"/>
</dbReference>
<dbReference type="PIR" id="C90935">
    <property type="entry name" value="C90935"/>
</dbReference>
<dbReference type="PIR" id="G85783">
    <property type="entry name" value="G85783"/>
</dbReference>
<dbReference type="RefSeq" id="NP_310478.1">
    <property type="nucleotide sequence ID" value="NC_002695.1"/>
</dbReference>
<dbReference type="RefSeq" id="WP_000995025.1">
    <property type="nucleotide sequence ID" value="NZ_SWKA01000004.1"/>
</dbReference>
<dbReference type="SMR" id="Q7ADE7"/>
<dbReference type="STRING" id="155864.Z2777"/>
<dbReference type="GeneID" id="914117"/>
<dbReference type="KEGG" id="ece:Z2777"/>
<dbReference type="KEGG" id="ecs:ECs_2451"/>
<dbReference type="PATRIC" id="fig|386585.9.peg.2565"/>
<dbReference type="eggNOG" id="COG3724">
    <property type="taxonomic scope" value="Bacteria"/>
</dbReference>
<dbReference type="HOGENOM" id="CLU_053835_0_0_6"/>
<dbReference type="OMA" id="RVAMNDQ"/>
<dbReference type="UniPathway" id="UPA00185">
    <property type="reaction ID" value="UER00280"/>
</dbReference>
<dbReference type="Proteomes" id="UP000000558">
    <property type="component" value="Chromosome"/>
</dbReference>
<dbReference type="Proteomes" id="UP000002519">
    <property type="component" value="Chromosome"/>
</dbReference>
<dbReference type="GO" id="GO:0009015">
    <property type="term" value="F:N-succinylarginine dihydrolase activity"/>
    <property type="evidence" value="ECO:0007669"/>
    <property type="project" value="UniProtKB-UniRule"/>
</dbReference>
<dbReference type="GO" id="GO:0019544">
    <property type="term" value="P:arginine catabolic process to glutamate"/>
    <property type="evidence" value="ECO:0007669"/>
    <property type="project" value="UniProtKB-UniRule"/>
</dbReference>
<dbReference type="GO" id="GO:0019545">
    <property type="term" value="P:arginine catabolic process to succinate"/>
    <property type="evidence" value="ECO:0007669"/>
    <property type="project" value="UniProtKB-UniRule"/>
</dbReference>
<dbReference type="FunFam" id="3.75.10.20:FF:000001">
    <property type="entry name" value="N-succinylarginine dihydrolase"/>
    <property type="match status" value="1"/>
</dbReference>
<dbReference type="Gene3D" id="3.75.10.20">
    <property type="entry name" value="Succinylarginine dihydrolase"/>
    <property type="match status" value="1"/>
</dbReference>
<dbReference type="HAMAP" id="MF_01172">
    <property type="entry name" value="AstB"/>
    <property type="match status" value="1"/>
</dbReference>
<dbReference type="InterPro" id="IPR037031">
    <property type="entry name" value="AstB_sf"/>
</dbReference>
<dbReference type="InterPro" id="IPR007079">
    <property type="entry name" value="SuccinylArg_d-Hdrlase_AstB"/>
</dbReference>
<dbReference type="NCBIfam" id="TIGR03241">
    <property type="entry name" value="arg_catab_astB"/>
    <property type="match status" value="1"/>
</dbReference>
<dbReference type="NCBIfam" id="NF009789">
    <property type="entry name" value="PRK13281.1"/>
    <property type="match status" value="1"/>
</dbReference>
<dbReference type="PANTHER" id="PTHR30420">
    <property type="entry name" value="N-SUCCINYLARGININE DIHYDROLASE"/>
    <property type="match status" value="1"/>
</dbReference>
<dbReference type="PANTHER" id="PTHR30420:SF2">
    <property type="entry name" value="N-SUCCINYLARGININE DIHYDROLASE"/>
    <property type="match status" value="1"/>
</dbReference>
<dbReference type="Pfam" id="PF04996">
    <property type="entry name" value="AstB"/>
    <property type="match status" value="1"/>
</dbReference>
<dbReference type="SUPFAM" id="SSF55909">
    <property type="entry name" value="Pentein"/>
    <property type="match status" value="1"/>
</dbReference>
<feature type="chain" id="PRO_0000262350" description="N-succinylarginine dihydrolase">
    <location>
        <begin position="1"/>
        <end position="447"/>
    </location>
</feature>
<feature type="active site" evidence="1">
    <location>
        <position position="174"/>
    </location>
</feature>
<feature type="active site" evidence="1">
    <location>
        <position position="248"/>
    </location>
</feature>
<feature type="active site" description="Nucleophile" evidence="1">
    <location>
        <position position="365"/>
    </location>
</feature>
<feature type="binding site" evidence="1">
    <location>
        <begin position="19"/>
        <end position="28"/>
    </location>
    <ligand>
        <name>substrate</name>
    </ligand>
</feature>
<feature type="binding site" evidence="1">
    <location>
        <position position="110"/>
    </location>
    <ligand>
        <name>substrate</name>
    </ligand>
</feature>
<feature type="binding site" evidence="1">
    <location>
        <begin position="137"/>
        <end position="138"/>
    </location>
    <ligand>
        <name>substrate</name>
    </ligand>
</feature>
<feature type="binding site" evidence="1">
    <location>
        <position position="212"/>
    </location>
    <ligand>
        <name>substrate</name>
    </ligand>
</feature>
<feature type="binding site" evidence="1">
    <location>
        <position position="250"/>
    </location>
    <ligand>
        <name>substrate</name>
    </ligand>
</feature>
<feature type="binding site" evidence="1">
    <location>
        <position position="359"/>
    </location>
    <ligand>
        <name>substrate</name>
    </ligand>
</feature>
<accession>Q7ADE7</accession>
<accession>Q8XDY9</accession>
<keyword id="KW-0056">Arginine metabolism</keyword>
<keyword id="KW-0378">Hydrolase</keyword>
<keyword id="KW-1185">Reference proteome</keyword>
<proteinExistence type="inferred from homology"/>
<comment type="function">
    <text evidence="1">Catalyzes the hydrolysis of N(2)-succinylarginine into N(2)-succinylornithine, ammonia and CO(2).</text>
</comment>
<comment type="catalytic activity">
    <reaction evidence="1">
        <text>N(2)-succinyl-L-arginine + 2 H2O + 2 H(+) = N(2)-succinyl-L-ornithine + 2 NH4(+) + CO2</text>
        <dbReference type="Rhea" id="RHEA:19533"/>
        <dbReference type="ChEBI" id="CHEBI:15377"/>
        <dbReference type="ChEBI" id="CHEBI:15378"/>
        <dbReference type="ChEBI" id="CHEBI:16526"/>
        <dbReference type="ChEBI" id="CHEBI:28938"/>
        <dbReference type="ChEBI" id="CHEBI:58241"/>
        <dbReference type="ChEBI" id="CHEBI:58514"/>
        <dbReference type="EC" id="3.5.3.23"/>
    </reaction>
</comment>
<comment type="pathway">
    <text evidence="1">Amino-acid degradation; L-arginine degradation via AST pathway; L-glutamate and succinate from L-arginine: step 2/5.</text>
</comment>
<comment type="subunit">
    <text evidence="1">Homodimer.</text>
</comment>
<comment type="similarity">
    <text evidence="1">Belongs to the succinylarginine dihydrolase family.</text>
</comment>